<proteinExistence type="inferred from homology"/>
<keyword id="KW-0216">Detoxification</keyword>
<keyword id="KW-0285">Flavoprotein</keyword>
<keyword id="KW-0288">FMN</keyword>
<keyword id="KW-0521">NADP</keyword>
<keyword id="KW-0560">Oxidoreductase</keyword>
<reference key="1">
    <citation type="submission" date="2008-10" db="EMBL/GenBank/DDBJ databases">
        <title>Genome sequence of Bacillus cereus G9842.</title>
        <authorList>
            <person name="Dodson R.J."/>
            <person name="Durkin A.S."/>
            <person name="Rosovitz M.J."/>
            <person name="Rasko D.A."/>
            <person name="Hoffmaster A."/>
            <person name="Ravel J."/>
            <person name="Sutton G."/>
        </authorList>
    </citation>
    <scope>NUCLEOTIDE SEQUENCE [LARGE SCALE GENOMIC DNA]</scope>
    <source>
        <strain>G9842</strain>
    </source>
</reference>
<organism>
    <name type="scientific">Bacillus cereus (strain G9842)</name>
    <dbReference type="NCBI Taxonomy" id="405531"/>
    <lineage>
        <taxon>Bacteria</taxon>
        <taxon>Bacillati</taxon>
        <taxon>Bacillota</taxon>
        <taxon>Bacilli</taxon>
        <taxon>Bacillales</taxon>
        <taxon>Bacillaceae</taxon>
        <taxon>Bacillus</taxon>
        <taxon>Bacillus cereus group</taxon>
    </lineage>
</organism>
<protein>
    <recommendedName>
        <fullName evidence="1">NADPH dehydrogenase</fullName>
        <ecNumber evidence="1">1.6.99.1</ecNumber>
    </recommendedName>
</protein>
<accession>B7ITF9</accession>
<gene>
    <name evidence="1" type="primary">namA</name>
    <name type="ordered locus">BCG9842_B3281</name>
</gene>
<sequence length="345" mass="38525">MNSKLFSPYTIKNVTLKNRIVMSPMCMYSSGNEDGRVTNFHLIHYGTRAAGQVGLVMVEATAVLAEGRISNKDLGIWDDNLIEGLHKTTTFIHDNGAKAAIQLAHAGRKAELGTNAFAPSAIPFSDTMKIPVEMNIQQIKETILAFQRAALRSKQAGFDVIELHGAHGYLINEFLSPLTNKRTDEYGGSPENRYRFLREIIDSVNKVWDGPIFVRISANDYHPDGLTVQDYVQYTKWMKEQGIDLIDCSSGAVVPAHIDVYPGYQVQYAKHIKEYTKIATGAVGLITTGSQAEQILNDNEADLIFIGRELLRNPYFPRIAANELGFELQEPHQYKRAPGKIHTNK</sequence>
<evidence type="ECO:0000255" key="1">
    <source>
        <dbReference type="HAMAP-Rule" id="MF_01614"/>
    </source>
</evidence>
<name>NAMA_BACC2</name>
<comment type="function">
    <text evidence="1">Catalyzes the reduction of the double bond of an array of alpha,beta-unsaturated aldehydes and ketones. It also reduces the nitro group of nitroester and nitroaromatic compounds. It could have a role in detoxification processes.</text>
</comment>
<comment type="catalytic activity">
    <reaction evidence="1">
        <text>A + NADPH + H(+) = AH2 + NADP(+)</text>
        <dbReference type="Rhea" id="RHEA:13149"/>
        <dbReference type="ChEBI" id="CHEBI:13193"/>
        <dbReference type="ChEBI" id="CHEBI:15378"/>
        <dbReference type="ChEBI" id="CHEBI:17499"/>
        <dbReference type="ChEBI" id="CHEBI:57783"/>
        <dbReference type="ChEBI" id="CHEBI:58349"/>
        <dbReference type="EC" id="1.6.99.1"/>
    </reaction>
</comment>
<comment type="cofactor">
    <cofactor evidence="1">
        <name>FMN</name>
        <dbReference type="ChEBI" id="CHEBI:58210"/>
    </cofactor>
</comment>
<comment type="subunit">
    <text evidence="1">Homotetramer.</text>
</comment>
<comment type="similarity">
    <text evidence="1">Belongs to the NADH:flavin oxidoreductase/NADH oxidase family. NamA subfamily.</text>
</comment>
<feature type="chain" id="PRO_1000185859" description="NADPH dehydrogenase">
    <location>
        <begin position="1"/>
        <end position="345"/>
    </location>
</feature>
<feature type="binding site" evidence="1">
    <location>
        <begin position="23"/>
        <end position="26"/>
    </location>
    <ligand>
        <name>FMN</name>
        <dbReference type="ChEBI" id="CHEBI:58210"/>
    </ligand>
</feature>
<feature type="binding site" evidence="1">
    <location>
        <position position="28"/>
    </location>
    <ligand>
        <name>substrate</name>
    </ligand>
</feature>
<feature type="binding site" evidence="1">
    <location>
        <position position="60"/>
    </location>
    <ligand>
        <name>FMN</name>
        <dbReference type="ChEBI" id="CHEBI:58210"/>
    </ligand>
</feature>
<feature type="binding site" evidence="1">
    <location>
        <position position="102"/>
    </location>
    <ligand>
        <name>FMN</name>
        <dbReference type="ChEBI" id="CHEBI:58210"/>
    </ligand>
</feature>
<feature type="binding site" evidence="1">
    <location>
        <begin position="164"/>
        <end position="167"/>
    </location>
    <ligand>
        <name>substrate</name>
    </ligand>
</feature>
<feature type="binding site" evidence="1">
    <location>
        <position position="215"/>
    </location>
    <ligand>
        <name>FMN</name>
        <dbReference type="ChEBI" id="CHEBI:58210"/>
    </ligand>
</feature>
<feature type="binding site" evidence="1">
    <location>
        <begin position="307"/>
        <end position="308"/>
    </location>
    <ligand>
        <name>FMN</name>
        <dbReference type="ChEBI" id="CHEBI:58210"/>
    </ligand>
</feature>
<dbReference type="EC" id="1.6.99.1" evidence="1"/>
<dbReference type="EMBL" id="CP001186">
    <property type="protein sequence ID" value="ACK95059.1"/>
    <property type="molecule type" value="Genomic_DNA"/>
</dbReference>
<dbReference type="RefSeq" id="WP_001086172.1">
    <property type="nucleotide sequence ID" value="NC_011772.1"/>
</dbReference>
<dbReference type="SMR" id="B7ITF9"/>
<dbReference type="KEGG" id="bcg:BCG9842_B3281"/>
<dbReference type="HOGENOM" id="CLU_012153_2_1_9"/>
<dbReference type="Proteomes" id="UP000006744">
    <property type="component" value="Chromosome"/>
</dbReference>
<dbReference type="GO" id="GO:0010181">
    <property type="term" value="F:FMN binding"/>
    <property type="evidence" value="ECO:0007669"/>
    <property type="project" value="UniProtKB-UniRule"/>
</dbReference>
<dbReference type="GO" id="GO:0050661">
    <property type="term" value="F:NADP binding"/>
    <property type="evidence" value="ECO:0007669"/>
    <property type="project" value="UniProtKB-UniRule"/>
</dbReference>
<dbReference type="GO" id="GO:0003959">
    <property type="term" value="F:NADPH dehydrogenase activity"/>
    <property type="evidence" value="ECO:0007669"/>
    <property type="project" value="UniProtKB-UniRule"/>
</dbReference>
<dbReference type="GO" id="GO:0009636">
    <property type="term" value="P:response to toxic substance"/>
    <property type="evidence" value="ECO:0007669"/>
    <property type="project" value="UniProtKB-KW"/>
</dbReference>
<dbReference type="CDD" id="cd02932">
    <property type="entry name" value="OYE_YqiM_FMN"/>
    <property type="match status" value="1"/>
</dbReference>
<dbReference type="Gene3D" id="3.20.20.70">
    <property type="entry name" value="Aldolase class I"/>
    <property type="match status" value="1"/>
</dbReference>
<dbReference type="HAMAP" id="MF_01614">
    <property type="entry name" value="NamA"/>
    <property type="match status" value="1"/>
</dbReference>
<dbReference type="InterPro" id="IPR013785">
    <property type="entry name" value="Aldolase_TIM"/>
</dbReference>
<dbReference type="InterPro" id="IPR023663">
    <property type="entry name" value="NADPH_DH_bac"/>
</dbReference>
<dbReference type="InterPro" id="IPR001155">
    <property type="entry name" value="OxRdtase_FMN_N"/>
</dbReference>
<dbReference type="InterPro" id="IPR044152">
    <property type="entry name" value="YqjM-like"/>
</dbReference>
<dbReference type="NCBIfam" id="NF010047">
    <property type="entry name" value="PRK13523.1"/>
    <property type="match status" value="1"/>
</dbReference>
<dbReference type="PANTHER" id="PTHR43303">
    <property type="entry name" value="NADPH DEHYDROGENASE C23G7.10C-RELATED"/>
    <property type="match status" value="1"/>
</dbReference>
<dbReference type="PANTHER" id="PTHR43303:SF4">
    <property type="entry name" value="NADPH DEHYDROGENASE C23G7.10C-RELATED"/>
    <property type="match status" value="1"/>
</dbReference>
<dbReference type="Pfam" id="PF00724">
    <property type="entry name" value="Oxidored_FMN"/>
    <property type="match status" value="1"/>
</dbReference>
<dbReference type="SUPFAM" id="SSF51395">
    <property type="entry name" value="FMN-linked oxidoreductases"/>
    <property type="match status" value="1"/>
</dbReference>